<keyword id="KW-0067">ATP-binding</keyword>
<keyword id="KW-0997">Cell inner membrane</keyword>
<keyword id="KW-1003">Cell membrane</keyword>
<keyword id="KW-0472">Membrane</keyword>
<keyword id="KW-0547">Nucleotide-binding</keyword>
<keyword id="KW-1278">Translocase</keyword>
<keyword id="KW-0812">Transmembrane</keyword>
<keyword id="KW-1133">Transmembrane helix</keyword>
<keyword id="KW-0813">Transport</keyword>
<sequence>MEANHQRNDLGLVALTMLAQYHNISLNPEEIKHKFDLDGKGLSLTSWLLAAKSLALKAKHIKKEISRLHLVNLPALVWQDNGKHFLLVKVDTDNNRYLTYNLEQDAPQILSQDEFEACYQGQLILVTSRASVVGQLAKFDFTWFIPAVIKYRKIFLETLIVSIFLQIFALITPLFFQVVMDKVLVHRGFSTLNIITVALAIVIIFEIVLSGLRTYVFSHSTSRIDVELGAKLFRHLLSLPISYFENRRVGDTVARVRELDQIRNFLTGQALTSVLDLLFSFIFFAVMWYYSPKLTLVILGSLPCYILWSIFISPILRRRLDEKFARSADNQAFLVESVTAINMIKAMAVAPQMTDTWDKQLASYVSSSFRVTVLATIGQQGVQLIQKTVMVINLWLGAHLVISGDLSIGQLIAFNMLSGQVIAPVIRLAQLWQDFQQVGISVTRLGDVLNSPTEQYQGKLSLPEIKGDISFKNIRFRYKPDAPTILNNVNLEIRQGEVIGIVGRSGSGKSTLTKLLQRFYIPENGQVLIDGHDLALADPNWLRRQIGVVLQDNVLLNRSIRENIALSDPGMPMERVIYAAKLAGAHDFISELREGYNTIVGEQGAGLSGGQRQRIAIARALVNNPKILIFDEATSALDYESEHIIMQNMQKICQGRTVILIAHRLSTVKNADRIIVMEKGEIVEQGKHHELLQNSNGLYSYLHQLQLN</sequence>
<protein>
    <recommendedName>
        <fullName>Leukotoxin translocation ATP-binding protein LktB</fullName>
        <ecNumber>7.4.2.5</ecNumber>
    </recommendedName>
</protein>
<organism>
    <name type="scientific">Mannheimia haemolytica</name>
    <name type="common">Pasteurella haemolytica</name>
    <dbReference type="NCBI Taxonomy" id="75985"/>
    <lineage>
        <taxon>Bacteria</taxon>
        <taxon>Pseudomonadati</taxon>
        <taxon>Pseudomonadota</taxon>
        <taxon>Gammaproteobacteria</taxon>
        <taxon>Pasteurellales</taxon>
        <taxon>Pasteurellaceae</taxon>
        <taxon>Mannheimia</taxon>
    </lineage>
</organism>
<gene>
    <name type="primary">lktB</name>
</gene>
<dbReference type="EC" id="7.4.2.5"/>
<dbReference type="EMBL" id="AF314510">
    <property type="protein sequence ID" value="AAL12779.1"/>
    <property type="molecule type" value="Genomic_DNA"/>
</dbReference>
<dbReference type="SMR" id="Q93FH2"/>
<dbReference type="GO" id="GO:0005886">
    <property type="term" value="C:plasma membrane"/>
    <property type="evidence" value="ECO:0007669"/>
    <property type="project" value="UniProtKB-SubCell"/>
</dbReference>
<dbReference type="GO" id="GO:0030256">
    <property type="term" value="C:type I protein secretion system complex"/>
    <property type="evidence" value="ECO:0007669"/>
    <property type="project" value="InterPro"/>
</dbReference>
<dbReference type="GO" id="GO:0140359">
    <property type="term" value="F:ABC-type transporter activity"/>
    <property type="evidence" value="ECO:0007669"/>
    <property type="project" value="InterPro"/>
</dbReference>
<dbReference type="GO" id="GO:0005524">
    <property type="term" value="F:ATP binding"/>
    <property type="evidence" value="ECO:0007669"/>
    <property type="project" value="UniProtKB-KW"/>
</dbReference>
<dbReference type="GO" id="GO:0016887">
    <property type="term" value="F:ATP hydrolysis activity"/>
    <property type="evidence" value="ECO:0007669"/>
    <property type="project" value="InterPro"/>
</dbReference>
<dbReference type="GO" id="GO:0034040">
    <property type="term" value="F:ATPase-coupled lipid transmembrane transporter activity"/>
    <property type="evidence" value="ECO:0007669"/>
    <property type="project" value="TreeGrafter"/>
</dbReference>
<dbReference type="GO" id="GO:0030253">
    <property type="term" value="P:protein secretion by the type I secretion system"/>
    <property type="evidence" value="ECO:0007669"/>
    <property type="project" value="InterPro"/>
</dbReference>
<dbReference type="GO" id="GO:0006508">
    <property type="term" value="P:proteolysis"/>
    <property type="evidence" value="ECO:0007669"/>
    <property type="project" value="InterPro"/>
</dbReference>
<dbReference type="CDD" id="cd18588">
    <property type="entry name" value="ABC_6TM_CyaB_HlyB_like"/>
    <property type="match status" value="1"/>
</dbReference>
<dbReference type="CDD" id="cd03252">
    <property type="entry name" value="ABCC_Hemolysin"/>
    <property type="match status" value="1"/>
</dbReference>
<dbReference type="CDD" id="cd02417">
    <property type="entry name" value="Peptidase_C39_likeA"/>
    <property type="match status" value="1"/>
</dbReference>
<dbReference type="FunFam" id="3.40.50.300:FF:000299">
    <property type="entry name" value="ABC transporter ATP-binding protein/permease"/>
    <property type="match status" value="1"/>
</dbReference>
<dbReference type="FunFam" id="1.20.1560.10:FF:000056">
    <property type="entry name" value="Alpha-hemolysin translocation ATP-binding protein HlyB"/>
    <property type="match status" value="1"/>
</dbReference>
<dbReference type="Gene3D" id="1.20.1560.10">
    <property type="entry name" value="ABC transporter type 1, transmembrane domain"/>
    <property type="match status" value="1"/>
</dbReference>
<dbReference type="Gene3D" id="3.90.70.10">
    <property type="entry name" value="Cysteine proteinases"/>
    <property type="match status" value="1"/>
</dbReference>
<dbReference type="Gene3D" id="3.40.50.300">
    <property type="entry name" value="P-loop containing nucleotide triphosphate hydrolases"/>
    <property type="match status" value="1"/>
</dbReference>
<dbReference type="InterPro" id="IPR003593">
    <property type="entry name" value="AAA+_ATPase"/>
</dbReference>
<dbReference type="InterPro" id="IPR011527">
    <property type="entry name" value="ABC1_TM_dom"/>
</dbReference>
<dbReference type="InterPro" id="IPR036640">
    <property type="entry name" value="ABC1_TM_sf"/>
</dbReference>
<dbReference type="InterPro" id="IPR003439">
    <property type="entry name" value="ABC_transporter-like_ATP-bd"/>
</dbReference>
<dbReference type="InterPro" id="IPR017871">
    <property type="entry name" value="ABC_transporter-like_CS"/>
</dbReference>
<dbReference type="InterPro" id="IPR010132">
    <property type="entry name" value="ATPase_T1SS_HlyB"/>
</dbReference>
<dbReference type="InterPro" id="IPR027417">
    <property type="entry name" value="P-loop_NTPase"/>
</dbReference>
<dbReference type="InterPro" id="IPR005074">
    <property type="entry name" value="Peptidase_C39"/>
</dbReference>
<dbReference type="InterPro" id="IPR039395">
    <property type="entry name" value="Peptidase_C39-like_A"/>
</dbReference>
<dbReference type="InterPro" id="IPR039421">
    <property type="entry name" value="Type_1_exporter"/>
</dbReference>
<dbReference type="NCBIfam" id="TIGR01846">
    <property type="entry name" value="type_I_sec_HlyB"/>
    <property type="match status" value="1"/>
</dbReference>
<dbReference type="PANTHER" id="PTHR24221">
    <property type="entry name" value="ATP-BINDING CASSETTE SUB-FAMILY B"/>
    <property type="match status" value="1"/>
</dbReference>
<dbReference type="PANTHER" id="PTHR24221:SF647">
    <property type="entry name" value="BLL6336 PROTEIN"/>
    <property type="match status" value="1"/>
</dbReference>
<dbReference type="Pfam" id="PF00664">
    <property type="entry name" value="ABC_membrane"/>
    <property type="match status" value="1"/>
</dbReference>
<dbReference type="Pfam" id="PF00005">
    <property type="entry name" value="ABC_tran"/>
    <property type="match status" value="1"/>
</dbReference>
<dbReference type="Pfam" id="PF03412">
    <property type="entry name" value="Peptidase_C39"/>
    <property type="match status" value="1"/>
</dbReference>
<dbReference type="SMART" id="SM00382">
    <property type="entry name" value="AAA"/>
    <property type="match status" value="1"/>
</dbReference>
<dbReference type="SUPFAM" id="SSF90123">
    <property type="entry name" value="ABC transporter transmembrane region"/>
    <property type="match status" value="1"/>
</dbReference>
<dbReference type="SUPFAM" id="SSF52540">
    <property type="entry name" value="P-loop containing nucleoside triphosphate hydrolases"/>
    <property type="match status" value="1"/>
</dbReference>
<dbReference type="PROSITE" id="PS50929">
    <property type="entry name" value="ABC_TM1F"/>
    <property type="match status" value="1"/>
</dbReference>
<dbReference type="PROSITE" id="PS00211">
    <property type="entry name" value="ABC_TRANSPORTER_1"/>
    <property type="match status" value="1"/>
</dbReference>
<dbReference type="PROSITE" id="PS50893">
    <property type="entry name" value="ABC_TRANSPORTER_2"/>
    <property type="match status" value="1"/>
</dbReference>
<dbReference type="PROSITE" id="PS50990">
    <property type="entry name" value="PEPTIDASE_C39"/>
    <property type="match status" value="1"/>
</dbReference>
<reference key="1">
    <citation type="journal article" date="2002" name="J. Bacteriol.">
        <title>Mosaic structure and molecular evolution of the leukotoxin operon (lktCABD) in Mannheimia (Pasteurella) haemolytica, Mannheimia glucosida, and Pasteurella trehalosi.</title>
        <authorList>
            <person name="Davies R.L."/>
            <person name="Campbell S."/>
            <person name="Whittam T.S."/>
        </authorList>
    </citation>
    <scope>NUCLEOTIDE SEQUENCE [GENOMIC DNA]</scope>
    <source>
        <strain>Serotype A13 / PH588</strain>
    </source>
</reference>
<evidence type="ECO:0000250" key="1"/>
<evidence type="ECO:0000255" key="2">
    <source>
        <dbReference type="PROSITE-ProRule" id="PRU00362"/>
    </source>
</evidence>
<evidence type="ECO:0000255" key="3">
    <source>
        <dbReference type="PROSITE-ProRule" id="PRU00434"/>
    </source>
</evidence>
<evidence type="ECO:0000255" key="4">
    <source>
        <dbReference type="PROSITE-ProRule" id="PRU00441"/>
    </source>
</evidence>
<evidence type="ECO:0000305" key="5"/>
<feature type="chain" id="PRO_0000092384" description="Leukotoxin translocation ATP-binding protein LktB">
    <location>
        <begin position="1"/>
        <end position="708"/>
    </location>
</feature>
<feature type="transmembrane region" description="Helical" evidence="4">
    <location>
        <begin position="159"/>
        <end position="179"/>
    </location>
</feature>
<feature type="transmembrane region" description="Helical" evidence="4">
    <location>
        <begin position="192"/>
        <end position="212"/>
    </location>
</feature>
<feature type="transmembrane region" description="Helical" evidence="4">
    <location>
        <begin position="270"/>
        <end position="290"/>
    </location>
</feature>
<feature type="transmembrane region" description="Helical" evidence="4">
    <location>
        <begin position="296"/>
        <end position="316"/>
    </location>
</feature>
<feature type="transmembrane region" description="Helical" evidence="4">
    <location>
        <begin position="389"/>
        <end position="409"/>
    </location>
</feature>
<feature type="domain" description="Peptidase C39" evidence="2">
    <location>
        <begin position="1"/>
        <end position="126"/>
    </location>
</feature>
<feature type="domain" description="ABC transmembrane type-1" evidence="4">
    <location>
        <begin position="155"/>
        <end position="437"/>
    </location>
</feature>
<feature type="domain" description="ABC transporter" evidence="2 3">
    <location>
        <begin position="469"/>
        <end position="704"/>
    </location>
</feature>
<feature type="binding site" evidence="2 3">
    <location>
        <begin position="503"/>
        <end position="510"/>
    </location>
    <ligand>
        <name>ATP</name>
        <dbReference type="ChEBI" id="CHEBI:30616"/>
    </ligand>
</feature>
<accession>Q93FH2</accession>
<name>LKB13_MANHA</name>
<comment type="function">
    <text evidence="5">Part of the ABC transporter complex LktBD involved in leukotoxin export. Transmembrane domains (TMD) form a pore in the inner membrane and the ATP-binding domain (NBD) is responsible for energy generation (Probable).</text>
</comment>
<comment type="catalytic activity">
    <reaction>
        <text>ATP + H2O + proteinSide 1 = ADP + phosphate + proteinSide 2.</text>
        <dbReference type="EC" id="7.4.2.5"/>
    </reaction>
</comment>
<comment type="subunit">
    <text evidence="1">Homodimer.</text>
</comment>
<comment type="subcellular location">
    <subcellularLocation>
        <location evidence="5">Cell inner membrane</location>
        <topology evidence="5">Multi-pass membrane protein</topology>
    </subcellularLocation>
</comment>
<comment type="domain">
    <text>In LktB the peptidase C39 domain, the ATP-binding domain (NBD) and the transmembrane domain (TMD) are fused.</text>
</comment>
<comment type="similarity">
    <text evidence="5">Belongs to the ABC transporter superfamily. Protein-1 exporter (TC 3.A.1.109) family.</text>
</comment>
<comment type="caution">
    <text evidence="5">Leu-10 is present instead of the conserved Cys which is expected to be the active site residue of peptidase C39. Thus this protein is presumed to be without peptidase activity.</text>
</comment>
<proteinExistence type="inferred from homology"/>